<accession>C0PWE7</accession>
<feature type="chain" id="PRO_1000197714" description="Succinate--CoA ligase [ADP-forming] subunit beta">
    <location>
        <begin position="1"/>
        <end position="388"/>
    </location>
</feature>
<feature type="domain" description="ATP-grasp" evidence="1">
    <location>
        <begin position="9"/>
        <end position="244"/>
    </location>
</feature>
<feature type="binding site" evidence="1">
    <location>
        <position position="46"/>
    </location>
    <ligand>
        <name>ATP</name>
        <dbReference type="ChEBI" id="CHEBI:30616"/>
    </ligand>
</feature>
<feature type="binding site" evidence="1">
    <location>
        <begin position="53"/>
        <end position="55"/>
    </location>
    <ligand>
        <name>ATP</name>
        <dbReference type="ChEBI" id="CHEBI:30616"/>
    </ligand>
</feature>
<feature type="binding site" evidence="1">
    <location>
        <position position="99"/>
    </location>
    <ligand>
        <name>ATP</name>
        <dbReference type="ChEBI" id="CHEBI:30616"/>
    </ligand>
</feature>
<feature type="binding site" evidence="1">
    <location>
        <position position="102"/>
    </location>
    <ligand>
        <name>ATP</name>
        <dbReference type="ChEBI" id="CHEBI:30616"/>
    </ligand>
</feature>
<feature type="binding site" evidence="1">
    <location>
        <position position="107"/>
    </location>
    <ligand>
        <name>ATP</name>
        <dbReference type="ChEBI" id="CHEBI:30616"/>
    </ligand>
</feature>
<feature type="binding site" evidence="1">
    <location>
        <position position="199"/>
    </location>
    <ligand>
        <name>Mg(2+)</name>
        <dbReference type="ChEBI" id="CHEBI:18420"/>
    </ligand>
</feature>
<feature type="binding site" evidence="1">
    <location>
        <position position="213"/>
    </location>
    <ligand>
        <name>Mg(2+)</name>
        <dbReference type="ChEBI" id="CHEBI:18420"/>
    </ligand>
</feature>
<feature type="binding site" evidence="1">
    <location>
        <position position="264"/>
    </location>
    <ligand>
        <name>substrate</name>
        <note>ligand shared with subunit alpha</note>
    </ligand>
</feature>
<feature type="binding site" evidence="1">
    <location>
        <begin position="321"/>
        <end position="323"/>
    </location>
    <ligand>
        <name>substrate</name>
        <note>ligand shared with subunit alpha</note>
    </ligand>
</feature>
<dbReference type="EC" id="6.2.1.5" evidence="1"/>
<dbReference type="EMBL" id="CP000857">
    <property type="protein sequence ID" value="ACN44910.1"/>
    <property type="molecule type" value="Genomic_DNA"/>
</dbReference>
<dbReference type="RefSeq" id="WP_001048590.1">
    <property type="nucleotide sequence ID" value="NC_012125.1"/>
</dbReference>
<dbReference type="SMR" id="C0PWE7"/>
<dbReference type="KEGG" id="sei:SPC_0735"/>
<dbReference type="HOGENOM" id="CLU_037430_4_0_6"/>
<dbReference type="UniPathway" id="UPA00223">
    <property type="reaction ID" value="UER00999"/>
</dbReference>
<dbReference type="Proteomes" id="UP000001599">
    <property type="component" value="Chromosome"/>
</dbReference>
<dbReference type="GO" id="GO:0005829">
    <property type="term" value="C:cytosol"/>
    <property type="evidence" value="ECO:0007669"/>
    <property type="project" value="TreeGrafter"/>
</dbReference>
<dbReference type="GO" id="GO:0042709">
    <property type="term" value="C:succinate-CoA ligase complex"/>
    <property type="evidence" value="ECO:0007669"/>
    <property type="project" value="TreeGrafter"/>
</dbReference>
<dbReference type="GO" id="GO:0005524">
    <property type="term" value="F:ATP binding"/>
    <property type="evidence" value="ECO:0007669"/>
    <property type="project" value="UniProtKB-UniRule"/>
</dbReference>
<dbReference type="GO" id="GO:0000287">
    <property type="term" value="F:magnesium ion binding"/>
    <property type="evidence" value="ECO:0007669"/>
    <property type="project" value="UniProtKB-UniRule"/>
</dbReference>
<dbReference type="GO" id="GO:0004775">
    <property type="term" value="F:succinate-CoA ligase (ADP-forming) activity"/>
    <property type="evidence" value="ECO:0007669"/>
    <property type="project" value="UniProtKB-UniRule"/>
</dbReference>
<dbReference type="GO" id="GO:0004776">
    <property type="term" value="F:succinate-CoA ligase (GDP-forming) activity"/>
    <property type="evidence" value="ECO:0007669"/>
    <property type="project" value="RHEA"/>
</dbReference>
<dbReference type="GO" id="GO:0006104">
    <property type="term" value="P:succinyl-CoA metabolic process"/>
    <property type="evidence" value="ECO:0007669"/>
    <property type="project" value="TreeGrafter"/>
</dbReference>
<dbReference type="GO" id="GO:0006099">
    <property type="term" value="P:tricarboxylic acid cycle"/>
    <property type="evidence" value="ECO:0007669"/>
    <property type="project" value="UniProtKB-UniRule"/>
</dbReference>
<dbReference type="FunFam" id="3.30.1490.20:FF:000002">
    <property type="entry name" value="Succinate--CoA ligase [ADP-forming] subunit beta"/>
    <property type="match status" value="1"/>
</dbReference>
<dbReference type="FunFam" id="3.30.470.20:FF:000002">
    <property type="entry name" value="Succinate--CoA ligase [ADP-forming] subunit beta"/>
    <property type="match status" value="1"/>
</dbReference>
<dbReference type="FunFam" id="3.40.50.261:FF:000001">
    <property type="entry name" value="Succinate--CoA ligase [ADP-forming] subunit beta"/>
    <property type="match status" value="1"/>
</dbReference>
<dbReference type="Gene3D" id="3.30.1490.20">
    <property type="entry name" value="ATP-grasp fold, A domain"/>
    <property type="match status" value="1"/>
</dbReference>
<dbReference type="Gene3D" id="3.30.470.20">
    <property type="entry name" value="ATP-grasp fold, B domain"/>
    <property type="match status" value="1"/>
</dbReference>
<dbReference type="Gene3D" id="3.40.50.261">
    <property type="entry name" value="Succinyl-CoA synthetase domains"/>
    <property type="match status" value="1"/>
</dbReference>
<dbReference type="HAMAP" id="MF_00558">
    <property type="entry name" value="Succ_CoA_beta"/>
    <property type="match status" value="1"/>
</dbReference>
<dbReference type="InterPro" id="IPR011761">
    <property type="entry name" value="ATP-grasp"/>
</dbReference>
<dbReference type="InterPro" id="IPR013650">
    <property type="entry name" value="ATP-grasp_succ-CoA_synth-type"/>
</dbReference>
<dbReference type="InterPro" id="IPR013815">
    <property type="entry name" value="ATP_grasp_subdomain_1"/>
</dbReference>
<dbReference type="InterPro" id="IPR017866">
    <property type="entry name" value="Succ-CoA_synthase_bsu_CS"/>
</dbReference>
<dbReference type="InterPro" id="IPR005811">
    <property type="entry name" value="SUCC_ACL_C"/>
</dbReference>
<dbReference type="InterPro" id="IPR005809">
    <property type="entry name" value="Succ_CoA_ligase-like_bsu"/>
</dbReference>
<dbReference type="InterPro" id="IPR016102">
    <property type="entry name" value="Succinyl-CoA_synth-like"/>
</dbReference>
<dbReference type="NCBIfam" id="NF001913">
    <property type="entry name" value="PRK00696.1"/>
    <property type="match status" value="1"/>
</dbReference>
<dbReference type="NCBIfam" id="TIGR01016">
    <property type="entry name" value="sucCoAbeta"/>
    <property type="match status" value="1"/>
</dbReference>
<dbReference type="PANTHER" id="PTHR11815:SF10">
    <property type="entry name" value="SUCCINATE--COA LIGASE [GDP-FORMING] SUBUNIT BETA, MITOCHONDRIAL"/>
    <property type="match status" value="1"/>
</dbReference>
<dbReference type="PANTHER" id="PTHR11815">
    <property type="entry name" value="SUCCINYL-COA SYNTHETASE BETA CHAIN"/>
    <property type="match status" value="1"/>
</dbReference>
<dbReference type="Pfam" id="PF08442">
    <property type="entry name" value="ATP-grasp_2"/>
    <property type="match status" value="1"/>
</dbReference>
<dbReference type="Pfam" id="PF00549">
    <property type="entry name" value="Ligase_CoA"/>
    <property type="match status" value="1"/>
</dbReference>
<dbReference type="PIRSF" id="PIRSF001554">
    <property type="entry name" value="SucCS_beta"/>
    <property type="match status" value="1"/>
</dbReference>
<dbReference type="SUPFAM" id="SSF56059">
    <property type="entry name" value="Glutathione synthetase ATP-binding domain-like"/>
    <property type="match status" value="1"/>
</dbReference>
<dbReference type="SUPFAM" id="SSF52210">
    <property type="entry name" value="Succinyl-CoA synthetase domains"/>
    <property type="match status" value="1"/>
</dbReference>
<dbReference type="PROSITE" id="PS50975">
    <property type="entry name" value="ATP_GRASP"/>
    <property type="match status" value="1"/>
</dbReference>
<dbReference type="PROSITE" id="PS01217">
    <property type="entry name" value="SUCCINYL_COA_LIG_3"/>
    <property type="match status" value="1"/>
</dbReference>
<keyword id="KW-0067">ATP-binding</keyword>
<keyword id="KW-0436">Ligase</keyword>
<keyword id="KW-0460">Magnesium</keyword>
<keyword id="KW-0479">Metal-binding</keyword>
<keyword id="KW-0547">Nucleotide-binding</keyword>
<keyword id="KW-0816">Tricarboxylic acid cycle</keyword>
<sequence>MNLHEYQAKQLFARYGLPAPVGYACTTPREAEEAASKIGAGPWVVKCQVHAGGRGKAGGVKVVKSKEEIRAFAENWLGKRLVTYQTDANGQPVNQILVEAATDIGKELYLGAVVDRSSRRVVFMASTEGGVEIEKVAEETPHLIHKVALDPLTGPMPYQGRELAFKLGLEGKLVQQFTKIFMGLATIFLERDLALIEINPLVITKQGDLICLDGKLGADGNALFRQPDLREMRDQSQEDPREAQAAQWELNYVALDGNIGCMVNGAGLAMGTMDIVKLHGGEPANFLDVGGGATKERVTEAFKIILSDDNVKAVLVNIFGGIVRCDLIADGIIGAVEEVGVNVPVVVRLEGNNAELGAKKLADSGLNIIAAKSLTDAAQQVVAAVEGK</sequence>
<protein>
    <recommendedName>
        <fullName evidence="1">Succinate--CoA ligase [ADP-forming] subunit beta</fullName>
        <ecNumber evidence="1">6.2.1.5</ecNumber>
    </recommendedName>
    <alternativeName>
        <fullName evidence="1">Succinyl-CoA synthetase subunit beta</fullName>
        <shortName evidence="1">SCS-beta</shortName>
    </alternativeName>
</protein>
<organism>
    <name type="scientific">Salmonella paratyphi C (strain RKS4594)</name>
    <dbReference type="NCBI Taxonomy" id="476213"/>
    <lineage>
        <taxon>Bacteria</taxon>
        <taxon>Pseudomonadati</taxon>
        <taxon>Pseudomonadota</taxon>
        <taxon>Gammaproteobacteria</taxon>
        <taxon>Enterobacterales</taxon>
        <taxon>Enterobacteriaceae</taxon>
        <taxon>Salmonella</taxon>
    </lineage>
</organism>
<gene>
    <name evidence="1" type="primary">sucC</name>
    <name type="ordered locus">SPC_0735</name>
</gene>
<evidence type="ECO:0000255" key="1">
    <source>
        <dbReference type="HAMAP-Rule" id="MF_00558"/>
    </source>
</evidence>
<proteinExistence type="inferred from homology"/>
<comment type="function">
    <text evidence="1">Succinyl-CoA synthetase functions in the citric acid cycle (TCA), coupling the hydrolysis of succinyl-CoA to the synthesis of either ATP or GTP and thus represents the only step of substrate-level phosphorylation in the TCA. The beta subunit provides nucleotide specificity of the enzyme and binds the substrate succinate, while the binding sites for coenzyme A and phosphate are found in the alpha subunit.</text>
</comment>
<comment type="catalytic activity">
    <reaction evidence="1">
        <text>succinate + ATP + CoA = succinyl-CoA + ADP + phosphate</text>
        <dbReference type="Rhea" id="RHEA:17661"/>
        <dbReference type="ChEBI" id="CHEBI:30031"/>
        <dbReference type="ChEBI" id="CHEBI:30616"/>
        <dbReference type="ChEBI" id="CHEBI:43474"/>
        <dbReference type="ChEBI" id="CHEBI:57287"/>
        <dbReference type="ChEBI" id="CHEBI:57292"/>
        <dbReference type="ChEBI" id="CHEBI:456216"/>
        <dbReference type="EC" id="6.2.1.5"/>
    </reaction>
    <physiologicalReaction direction="right-to-left" evidence="1">
        <dbReference type="Rhea" id="RHEA:17663"/>
    </physiologicalReaction>
</comment>
<comment type="catalytic activity">
    <reaction evidence="1">
        <text>GTP + succinate + CoA = succinyl-CoA + GDP + phosphate</text>
        <dbReference type="Rhea" id="RHEA:22120"/>
        <dbReference type="ChEBI" id="CHEBI:30031"/>
        <dbReference type="ChEBI" id="CHEBI:37565"/>
        <dbReference type="ChEBI" id="CHEBI:43474"/>
        <dbReference type="ChEBI" id="CHEBI:57287"/>
        <dbReference type="ChEBI" id="CHEBI:57292"/>
        <dbReference type="ChEBI" id="CHEBI:58189"/>
    </reaction>
    <physiologicalReaction direction="right-to-left" evidence="1">
        <dbReference type="Rhea" id="RHEA:22122"/>
    </physiologicalReaction>
</comment>
<comment type="cofactor">
    <cofactor evidence="1">
        <name>Mg(2+)</name>
        <dbReference type="ChEBI" id="CHEBI:18420"/>
    </cofactor>
    <text evidence="1">Binds 1 Mg(2+) ion per subunit.</text>
</comment>
<comment type="pathway">
    <text evidence="1">Carbohydrate metabolism; tricarboxylic acid cycle; succinate from succinyl-CoA (ligase route): step 1/1.</text>
</comment>
<comment type="subunit">
    <text evidence="1">Heterotetramer of two alpha and two beta subunits.</text>
</comment>
<comment type="similarity">
    <text evidence="1">Belongs to the succinate/malate CoA ligase beta subunit family.</text>
</comment>
<name>SUCC_SALPC</name>
<reference key="1">
    <citation type="journal article" date="2009" name="PLoS ONE">
        <title>Salmonella paratyphi C: genetic divergence from Salmonella choleraesuis and pathogenic convergence with Salmonella typhi.</title>
        <authorList>
            <person name="Liu W.-Q."/>
            <person name="Feng Y."/>
            <person name="Wang Y."/>
            <person name="Zou Q.-H."/>
            <person name="Chen F."/>
            <person name="Guo J.-T."/>
            <person name="Peng Y.-H."/>
            <person name="Jin Y."/>
            <person name="Li Y.-G."/>
            <person name="Hu S.-N."/>
            <person name="Johnston R.N."/>
            <person name="Liu G.-R."/>
            <person name="Liu S.-L."/>
        </authorList>
    </citation>
    <scope>NUCLEOTIDE SEQUENCE [LARGE SCALE GENOMIC DNA]</scope>
    <source>
        <strain>RKS4594</strain>
    </source>
</reference>